<feature type="chain" id="PRO_0000059283" description="Poly-beta-1,6-N-acetyl-D-glucosamine synthase">
    <location>
        <begin position="1"/>
        <end position="412"/>
    </location>
</feature>
<feature type="transmembrane region" description="Helical" evidence="1">
    <location>
        <begin position="7"/>
        <end position="28"/>
    </location>
</feature>
<feature type="transmembrane region" description="Helical" evidence="1">
    <location>
        <begin position="298"/>
        <end position="320"/>
    </location>
</feature>
<feature type="transmembrane region" description="Helical" evidence="1">
    <location>
        <begin position="332"/>
        <end position="354"/>
    </location>
</feature>
<feature type="transmembrane region" description="Helical" evidence="1">
    <location>
        <begin position="364"/>
        <end position="386"/>
    </location>
</feature>
<sequence length="412" mass="47750">MHVFNFLLFYPIFMSIYWIVGSIYYFFIKEKPFNRSLLVKSEHQQVEGISFLLACYNESETVQDTLSSVLSLEYPEKEIIIINDGSSDNTAEIIYDFKKNHDFKFVDLEVNRGKANALNEGIKQASYEYVMCLDADTVIDDDAPFYMIEDFKKNPKLGAVTGNPRIRNKSSILGKIQTIEYASIIGCIKRSQSLAGAINTISGVFTLFKKSALKDVGYWDTDMITEDIAVSWKLHLFDYEIKYEPRALCWMLVPETIGGLWKQRVRWAQGGHEVLLRDFWPTIKTKKLSLYILMFEQIASITWVYIVLCYLSFLVITANILDYTYLKYSFSIFFFSSFTMTFINIIQFTVALFIDSRYEKKNIVGLIFLSWYPTLYWVINAAVVIMAFPKALKRKKGGYATWSSPDRGNIQR</sequence>
<comment type="function">
    <text evidence="2 3">N-acetylglucosaminyltransferase that catalyzes the polymerization of single monomer units of UDP-N-acetylglucosamine to produce the linear homomer poly-beta-1,6-N-acetyl-D-glucosamine (PNAG, also referred to as PIA), a biofilm adhesin polysaccharide. Requires IcaD for full activity.</text>
</comment>
<comment type="subcellular location">
    <subcellularLocation>
        <location evidence="3">Cell membrane</location>
        <topology evidence="3">Multi-pass membrane protein</topology>
    </subcellularLocation>
</comment>
<comment type="disruption phenotype">
    <text evidence="2">Complete loss of the intercellular adhesion phenotype.</text>
</comment>
<comment type="similarity">
    <text evidence="4">Belongs to the glycosyltransferase 2 family.</text>
</comment>
<protein>
    <recommendedName>
        <fullName>Poly-beta-1,6-N-acetyl-D-glucosamine synthase</fullName>
        <shortName>PNAG synthase</shortName>
        <shortName>Poly-beta-1,6-GlcNAc synthase</shortName>
        <ecNumber>2.4.1.-</ecNumber>
    </recommendedName>
    <alternativeName>
        <fullName>Biofilm polysaccharide intercellular adhesin synthesis protein IcaA</fullName>
        <shortName>Biofilm PIA synthesis protein IcaA</shortName>
    </alternativeName>
    <alternativeName>
        <fullName>Intercellular adhesion protein A</fullName>
    </alternativeName>
    <alternativeName>
        <fullName>N-acetylglucosaminyltransferase IcaA</fullName>
    </alternativeName>
</protein>
<reference key="1">
    <citation type="journal article" date="1996" name="Mol. Microbiol.">
        <title>Molecular basis of intercellular adhesion in the biofilm-forming Staphylococcus epidermidis.</title>
        <authorList>
            <person name="Heilmann C."/>
            <person name="Schweitzer O."/>
            <person name="Gerke C."/>
            <person name="Vanittanakom N."/>
            <person name="Mack D."/>
            <person name="Goetz F."/>
        </authorList>
    </citation>
    <scope>NUCLEOTIDE SEQUENCE [GENOMIC DNA]</scope>
    <scope>ROLE IN BIOFILM FORMATION</scope>
    <scope>DISRUPTION PHENOTYPE</scope>
</reference>
<reference key="2">
    <citation type="journal article" date="2005" name="J. Bacteriol.">
        <title>Insights on evolution of virulence and resistance from the complete genome analysis of an early methicillin-resistant Staphylococcus aureus strain and a biofilm-producing methicillin-resistant Staphylococcus epidermidis strain.</title>
        <authorList>
            <person name="Gill S.R."/>
            <person name="Fouts D.E."/>
            <person name="Archer G.L."/>
            <person name="Mongodin E.F."/>
            <person name="DeBoy R.T."/>
            <person name="Ravel J."/>
            <person name="Paulsen I.T."/>
            <person name="Kolonay J.F."/>
            <person name="Brinkac L.M."/>
            <person name="Beanan M.J."/>
            <person name="Dodson R.J."/>
            <person name="Daugherty S.C."/>
            <person name="Madupu R."/>
            <person name="Angiuoli S.V."/>
            <person name="Durkin A.S."/>
            <person name="Haft D.H."/>
            <person name="Vamathevan J.J."/>
            <person name="Khouri H."/>
            <person name="Utterback T.R."/>
            <person name="Lee C."/>
            <person name="Dimitrov G."/>
            <person name="Jiang L."/>
            <person name="Qin H."/>
            <person name="Weidman J."/>
            <person name="Tran K."/>
            <person name="Kang K.H."/>
            <person name="Hance I.R."/>
            <person name="Nelson K.E."/>
            <person name="Fraser C.M."/>
        </authorList>
    </citation>
    <scope>NUCLEOTIDE SEQUENCE [LARGE SCALE GENOMIC DNA]</scope>
    <source>
        <strain>ATCC 35984 / DSM 28319 / BCRC 17069 / CCUG 31568 / BM 3577 / RP62A</strain>
    </source>
</reference>
<reference key="3">
    <citation type="journal article" date="1998" name="J. Biol. Chem.">
        <title>Characterization of the N-acetylglucosaminyltransferase activity involved in the biosynthesis of the Staphylococcus epidermidis polysaccharide intercellular adhesin.</title>
        <authorList>
            <person name="Gerke C."/>
            <person name="Kraft A."/>
            <person name="Sussmuth R."/>
            <person name="Schweitzer O."/>
            <person name="Goetz F."/>
        </authorList>
    </citation>
    <scope>FUNCTION</scope>
    <scope>CATALYTIC ACTIVITY</scope>
    <scope>SUBCELLULAR LOCATION</scope>
</reference>
<accession>Q5HKQ0</accession>
<accession>Q54066</accession>
<gene>
    <name type="primary">icaA</name>
    <name type="ordered locus">SERP2293</name>
</gene>
<name>ICAA_STAEQ</name>
<evidence type="ECO:0000255" key="1"/>
<evidence type="ECO:0000269" key="2">
    <source>
    </source>
</evidence>
<evidence type="ECO:0000269" key="3">
    <source>
    </source>
</evidence>
<evidence type="ECO:0000305" key="4"/>
<dbReference type="EC" id="2.4.1.-"/>
<dbReference type="EMBL" id="U43366">
    <property type="protein sequence ID" value="AAC06117.1"/>
    <property type="molecule type" value="Genomic_DNA"/>
</dbReference>
<dbReference type="EMBL" id="CP000029">
    <property type="protein sequence ID" value="AAW53175.1"/>
    <property type="molecule type" value="Genomic_DNA"/>
</dbReference>
<dbReference type="PIR" id="S77608">
    <property type="entry name" value="S77608"/>
</dbReference>
<dbReference type="RefSeq" id="WP_002497699.1">
    <property type="nucleotide sequence ID" value="NC_002976.3"/>
</dbReference>
<dbReference type="SMR" id="Q5HKQ0"/>
<dbReference type="STRING" id="176279.SERP2293"/>
<dbReference type="CAZy" id="GT2">
    <property type="family name" value="Glycosyltransferase Family 2"/>
</dbReference>
<dbReference type="TCDB" id="4.D.1.1.2">
    <property type="family name" value="the putative vectorial glycosyl polymerization (vgp) family"/>
</dbReference>
<dbReference type="KEGG" id="ser:SERP2293"/>
<dbReference type="eggNOG" id="COG1215">
    <property type="taxonomic scope" value="Bacteria"/>
</dbReference>
<dbReference type="HOGENOM" id="CLU_023978_0_1_9"/>
<dbReference type="Proteomes" id="UP000000531">
    <property type="component" value="Chromosome"/>
</dbReference>
<dbReference type="GO" id="GO:0005886">
    <property type="term" value="C:plasma membrane"/>
    <property type="evidence" value="ECO:0007669"/>
    <property type="project" value="UniProtKB-SubCell"/>
</dbReference>
<dbReference type="GO" id="GO:0008375">
    <property type="term" value="F:acetylglucosaminyltransferase activity"/>
    <property type="evidence" value="ECO:0007669"/>
    <property type="project" value="InterPro"/>
</dbReference>
<dbReference type="GO" id="GO:0043708">
    <property type="term" value="P:cell adhesion involved in biofilm formation"/>
    <property type="evidence" value="ECO:0007669"/>
    <property type="project" value="InterPro"/>
</dbReference>
<dbReference type="CDD" id="cd06423">
    <property type="entry name" value="CESA_like"/>
    <property type="match status" value="1"/>
</dbReference>
<dbReference type="Gene3D" id="3.90.550.10">
    <property type="entry name" value="Spore Coat Polysaccharide Biosynthesis Protein SpsA, Chain A"/>
    <property type="match status" value="1"/>
</dbReference>
<dbReference type="InterPro" id="IPR001173">
    <property type="entry name" value="Glyco_trans_2-like"/>
</dbReference>
<dbReference type="InterPro" id="IPR029044">
    <property type="entry name" value="Nucleotide-diphossugar_trans"/>
</dbReference>
<dbReference type="InterPro" id="IPR023853">
    <property type="entry name" value="PGA_PgaC/IcaA"/>
</dbReference>
<dbReference type="NCBIfam" id="TIGR03937">
    <property type="entry name" value="PgaC_IcaA"/>
    <property type="match status" value="1"/>
</dbReference>
<dbReference type="PANTHER" id="PTHR43630">
    <property type="entry name" value="POLY-BETA-1,6-N-ACETYL-D-GLUCOSAMINE SYNTHASE"/>
    <property type="match status" value="1"/>
</dbReference>
<dbReference type="PANTHER" id="PTHR43630:SF1">
    <property type="entry name" value="POLY-BETA-1,6-N-ACETYL-D-GLUCOSAMINE SYNTHASE"/>
    <property type="match status" value="1"/>
</dbReference>
<dbReference type="Pfam" id="PF00535">
    <property type="entry name" value="Glycos_transf_2"/>
    <property type="match status" value="1"/>
</dbReference>
<dbReference type="SUPFAM" id="SSF53448">
    <property type="entry name" value="Nucleotide-diphospho-sugar transferases"/>
    <property type="match status" value="1"/>
</dbReference>
<organism>
    <name type="scientific">Staphylococcus epidermidis (strain ATCC 35984 / DSM 28319 / BCRC 17069 / CCUG 31568 / BM 3577 / RP62A)</name>
    <dbReference type="NCBI Taxonomy" id="176279"/>
    <lineage>
        <taxon>Bacteria</taxon>
        <taxon>Bacillati</taxon>
        <taxon>Bacillota</taxon>
        <taxon>Bacilli</taxon>
        <taxon>Bacillales</taxon>
        <taxon>Staphylococcaceae</taxon>
        <taxon>Staphylococcus</taxon>
    </lineage>
</organism>
<proteinExistence type="evidence at protein level"/>
<keyword id="KW-1003">Cell membrane</keyword>
<keyword id="KW-0328">Glycosyltransferase</keyword>
<keyword id="KW-0472">Membrane</keyword>
<keyword id="KW-1185">Reference proteome</keyword>
<keyword id="KW-0808">Transferase</keyword>
<keyword id="KW-0812">Transmembrane</keyword>
<keyword id="KW-1133">Transmembrane helix</keyword>